<dbReference type="EMBL" id="L27471">
    <property type="protein sequence ID" value="AAA98641.1"/>
    <property type="molecule type" value="mRNA"/>
</dbReference>
<dbReference type="PIR" id="S56644">
    <property type="entry name" value="S56644"/>
</dbReference>
<dbReference type="SMR" id="Q42693"/>
<dbReference type="PaxDb" id="3055-EDO97815"/>
<dbReference type="ProMEX" id="Q42693"/>
<dbReference type="eggNOG" id="KOG0356">
    <property type="taxonomic scope" value="Eukaryota"/>
</dbReference>
<dbReference type="GO" id="GO:0009507">
    <property type="term" value="C:chloroplast"/>
    <property type="evidence" value="ECO:0007669"/>
    <property type="project" value="UniProtKB-SubCell"/>
</dbReference>
<dbReference type="GO" id="GO:0005524">
    <property type="term" value="F:ATP binding"/>
    <property type="evidence" value="ECO:0007669"/>
    <property type="project" value="UniProtKB-KW"/>
</dbReference>
<dbReference type="GO" id="GO:0140662">
    <property type="term" value="F:ATP-dependent protein folding chaperone"/>
    <property type="evidence" value="ECO:0007669"/>
    <property type="project" value="InterPro"/>
</dbReference>
<dbReference type="GO" id="GO:0042026">
    <property type="term" value="P:protein refolding"/>
    <property type="evidence" value="ECO:0007669"/>
    <property type="project" value="InterPro"/>
</dbReference>
<dbReference type="CDD" id="cd03344">
    <property type="entry name" value="GroEL"/>
    <property type="match status" value="1"/>
</dbReference>
<dbReference type="FunFam" id="3.50.7.10:FF:000001">
    <property type="entry name" value="60 kDa chaperonin"/>
    <property type="match status" value="1"/>
</dbReference>
<dbReference type="Gene3D" id="3.50.7.10">
    <property type="entry name" value="GroEL"/>
    <property type="match status" value="1"/>
</dbReference>
<dbReference type="Gene3D" id="1.10.560.10">
    <property type="entry name" value="GroEL-like equatorial domain"/>
    <property type="match status" value="1"/>
</dbReference>
<dbReference type="Gene3D" id="3.30.260.10">
    <property type="entry name" value="TCP-1-like chaperonin intermediate domain"/>
    <property type="match status" value="1"/>
</dbReference>
<dbReference type="InterPro" id="IPR018370">
    <property type="entry name" value="Chaperonin_Cpn60_CS"/>
</dbReference>
<dbReference type="InterPro" id="IPR001844">
    <property type="entry name" value="Cpn60/GroEL"/>
</dbReference>
<dbReference type="InterPro" id="IPR002423">
    <property type="entry name" value="Cpn60/GroEL/TCP-1"/>
</dbReference>
<dbReference type="InterPro" id="IPR027409">
    <property type="entry name" value="GroEL-like_apical_dom_sf"/>
</dbReference>
<dbReference type="InterPro" id="IPR027413">
    <property type="entry name" value="GROEL-like_equatorial_sf"/>
</dbReference>
<dbReference type="InterPro" id="IPR027410">
    <property type="entry name" value="TCP-1-like_intermed_sf"/>
</dbReference>
<dbReference type="NCBIfam" id="NF000592">
    <property type="entry name" value="PRK00013.1"/>
    <property type="match status" value="1"/>
</dbReference>
<dbReference type="NCBIfam" id="NF009487">
    <property type="entry name" value="PRK12849.1"/>
    <property type="match status" value="1"/>
</dbReference>
<dbReference type="NCBIfam" id="NF009488">
    <property type="entry name" value="PRK12850.1"/>
    <property type="match status" value="1"/>
</dbReference>
<dbReference type="NCBIfam" id="NF009489">
    <property type="entry name" value="PRK12851.1"/>
    <property type="match status" value="1"/>
</dbReference>
<dbReference type="PANTHER" id="PTHR45633">
    <property type="entry name" value="60 KDA HEAT SHOCK PROTEIN, MITOCHONDRIAL"/>
    <property type="match status" value="1"/>
</dbReference>
<dbReference type="Pfam" id="PF00118">
    <property type="entry name" value="Cpn60_TCP1"/>
    <property type="match status" value="1"/>
</dbReference>
<dbReference type="SUPFAM" id="SSF52029">
    <property type="entry name" value="GroEL apical domain-like"/>
    <property type="match status" value="1"/>
</dbReference>
<dbReference type="SUPFAM" id="SSF48592">
    <property type="entry name" value="GroEL equatorial domain-like"/>
    <property type="match status" value="1"/>
</dbReference>
<dbReference type="SUPFAM" id="SSF54849">
    <property type="entry name" value="GroEL-intermediate domain like"/>
    <property type="match status" value="1"/>
</dbReference>
<dbReference type="PROSITE" id="PS00296">
    <property type="entry name" value="CHAPERONINS_CPN60"/>
    <property type="match status" value="1"/>
</dbReference>
<comment type="function">
    <text>This protein binds RuBisCO small and large subunits and is implicated in the assembly of the enzyme oligomer.</text>
</comment>
<comment type="subunit">
    <text>Oligomer of probably six alpha and six beta subunits.</text>
</comment>
<comment type="subcellular location">
    <subcellularLocation>
        <location>Plastid</location>
        <location>Chloroplast</location>
    </subcellularLocation>
</comment>
<comment type="induction">
    <text>By heat shock.</text>
</comment>
<comment type="miscellaneous">
    <text>This protein shows ATPase activity.</text>
</comment>
<comment type="similarity">
    <text evidence="1">Belongs to the chaperonin (HSP60) family.</text>
</comment>
<reference key="1">
    <citation type="journal article" date="1995" name="Plant Mol. Biol.">
        <title>Chlamydomonas transcripts encoding three divergent plastid chaperonins are heat-inducible.</title>
        <authorList>
            <person name="Thompson M.D."/>
            <person name="Paavola C.D."/>
            <person name="Lenvik T.R."/>
            <person name="Gantt J.S."/>
        </authorList>
    </citation>
    <scope>NUCLEOTIDE SEQUENCE [MRNA]</scope>
</reference>
<sequence length="435" mass="46836">KSGMEKTVQELVKELRKMSSVVQTDKDLANVACVSAGGNTDIGSLISDAMAKVGRTGVVTMEEGKTAEDQLVFVEGMQFERGYTSPYFVTDPERMICEYENCKILLVDKKISTARDIITILESAIRGNYPLLIMAEEVEQEALATLVVNKLRGTLKVVAIKAPGFGERRSSYLEDIAILTGGTVVGDEMGVSLEQATDAVLGTAAKITITKERTTVVGDGSTAADVAARVKQIRNLQMQTDQDYEREKLQERIARLSGGVAIIQVGAQTETELKEKKLRVEDALNATRAAVEEGVVPGGGCTLLRLSEKVDVIKRRMTDPEQQMGADIIKRALCYPIKLIAQNAGVNGSVVMNEVMKNLDRPHYGYNAATDSFENLMETGIIDPSKVVRCSMENAVSVAKTFLLADVVVTELKEIEAGAKPNPVAPGAAGFGGGL</sequence>
<name>RUBB_CHLRE</name>
<evidence type="ECO:0000305" key="1"/>
<proteinExistence type="evidence at transcript level"/>
<accession>Q42693</accession>
<protein>
    <recommendedName>
        <fullName>RuBisCO large subunit-binding protein subunit beta-1</fullName>
    </recommendedName>
    <alternativeName>
        <fullName>60 kDa chaperonin subunit beta-1</fullName>
    </alternativeName>
    <alternativeName>
        <fullName>CPN-60 beta-1</fullName>
    </alternativeName>
</protein>
<feature type="chain" id="PRO_0000063631" description="RuBisCO large subunit-binding protein subunit beta-1">
    <location>
        <begin position="1" status="less than"/>
        <end position="435"/>
    </location>
</feature>
<feature type="non-terminal residue">
    <location>
        <position position="1"/>
    </location>
</feature>
<keyword id="KW-0067">ATP-binding</keyword>
<keyword id="KW-0143">Chaperone</keyword>
<keyword id="KW-0150">Chloroplast</keyword>
<keyword id="KW-0547">Nucleotide-binding</keyword>
<keyword id="KW-0934">Plastid</keyword>
<keyword id="KW-0346">Stress response</keyword>
<organism>
    <name type="scientific">Chlamydomonas reinhardtii</name>
    <name type="common">Chlamydomonas smithii</name>
    <dbReference type="NCBI Taxonomy" id="3055"/>
    <lineage>
        <taxon>Eukaryota</taxon>
        <taxon>Viridiplantae</taxon>
        <taxon>Chlorophyta</taxon>
        <taxon>core chlorophytes</taxon>
        <taxon>Chlorophyceae</taxon>
        <taxon>CS clade</taxon>
        <taxon>Chlamydomonadales</taxon>
        <taxon>Chlamydomonadaceae</taxon>
        <taxon>Chlamydomonas</taxon>
    </lineage>
</organism>